<gene>
    <name evidence="1" type="primary">trpB</name>
    <name type="ordered locus">E2348C_1451</name>
</gene>
<sequence length="397" mass="42998">MTTLLNPYFGEFGGMYVPQILMPALRQLEEAFVSAQKDPEFQAQFNDLLKNYAGRPTALTKCQNITAGTNTTLYLKREDLLHGGAHKTNQVLGQALLAKRMGKTEIIAETGAGQHGVASALASALLGLKCRIYMGAKDVERQSPNVFRMRLMGAEVIPVHSGSATLKDACNEALRDWSGSYETAHYMLGTAAGPHPYPTIVREFQRMIGEETKAQILEREGRLPDAVIACVGGGSNAIGMFADFINETDVGLIGVEPGGHGIETGEHGAPLKHGRVGIYFGMKAPMMQTEDGQIEESYSISAGLDFPSVGPQHAYLNSTGRADYVSITDDEALEAFKTLCLHEGIIPALESSHALAHALKMMRENPEKEQLLVVNLSGRGDKDIFTVHDILKARGEI</sequence>
<keyword id="KW-0028">Amino-acid biosynthesis</keyword>
<keyword id="KW-0057">Aromatic amino acid biosynthesis</keyword>
<keyword id="KW-0456">Lyase</keyword>
<keyword id="KW-0663">Pyridoxal phosphate</keyword>
<keyword id="KW-1185">Reference proteome</keyword>
<keyword id="KW-0822">Tryptophan biosynthesis</keyword>
<feature type="chain" id="PRO_1000198744" description="Tryptophan synthase beta chain">
    <location>
        <begin position="1"/>
        <end position="397"/>
    </location>
</feature>
<feature type="modified residue" description="N6-(pyridoxal phosphate)lysine" evidence="1">
    <location>
        <position position="87"/>
    </location>
</feature>
<reference key="1">
    <citation type="journal article" date="2009" name="J. Bacteriol.">
        <title>Complete genome sequence and comparative genome analysis of enteropathogenic Escherichia coli O127:H6 strain E2348/69.</title>
        <authorList>
            <person name="Iguchi A."/>
            <person name="Thomson N.R."/>
            <person name="Ogura Y."/>
            <person name="Saunders D."/>
            <person name="Ooka T."/>
            <person name="Henderson I.R."/>
            <person name="Harris D."/>
            <person name="Asadulghani M."/>
            <person name="Kurokawa K."/>
            <person name="Dean P."/>
            <person name="Kenny B."/>
            <person name="Quail M.A."/>
            <person name="Thurston S."/>
            <person name="Dougan G."/>
            <person name="Hayashi T."/>
            <person name="Parkhill J."/>
            <person name="Frankel G."/>
        </authorList>
    </citation>
    <scope>NUCLEOTIDE SEQUENCE [LARGE SCALE GENOMIC DNA]</scope>
    <source>
        <strain>E2348/69 / EPEC</strain>
    </source>
</reference>
<organism>
    <name type="scientific">Escherichia coli O127:H6 (strain E2348/69 / EPEC)</name>
    <dbReference type="NCBI Taxonomy" id="574521"/>
    <lineage>
        <taxon>Bacteria</taxon>
        <taxon>Pseudomonadati</taxon>
        <taxon>Pseudomonadota</taxon>
        <taxon>Gammaproteobacteria</taxon>
        <taxon>Enterobacterales</taxon>
        <taxon>Enterobacteriaceae</taxon>
        <taxon>Escherichia</taxon>
    </lineage>
</organism>
<protein>
    <recommendedName>
        <fullName evidence="1">Tryptophan synthase beta chain</fullName>
        <ecNumber evidence="1">4.2.1.20</ecNumber>
    </recommendedName>
</protein>
<evidence type="ECO:0000255" key="1">
    <source>
        <dbReference type="HAMAP-Rule" id="MF_00133"/>
    </source>
</evidence>
<comment type="function">
    <text evidence="1">The beta subunit is responsible for the synthesis of L-tryptophan from indole and L-serine.</text>
</comment>
<comment type="catalytic activity">
    <reaction evidence="1">
        <text>(1S,2R)-1-C-(indol-3-yl)glycerol 3-phosphate + L-serine = D-glyceraldehyde 3-phosphate + L-tryptophan + H2O</text>
        <dbReference type="Rhea" id="RHEA:10532"/>
        <dbReference type="ChEBI" id="CHEBI:15377"/>
        <dbReference type="ChEBI" id="CHEBI:33384"/>
        <dbReference type="ChEBI" id="CHEBI:57912"/>
        <dbReference type="ChEBI" id="CHEBI:58866"/>
        <dbReference type="ChEBI" id="CHEBI:59776"/>
        <dbReference type="EC" id="4.2.1.20"/>
    </reaction>
</comment>
<comment type="cofactor">
    <cofactor evidence="1">
        <name>pyridoxal 5'-phosphate</name>
        <dbReference type="ChEBI" id="CHEBI:597326"/>
    </cofactor>
</comment>
<comment type="pathway">
    <text evidence="1">Amino-acid biosynthesis; L-tryptophan biosynthesis; L-tryptophan from chorismate: step 5/5.</text>
</comment>
<comment type="subunit">
    <text evidence="1">Tetramer of two alpha and two beta chains.</text>
</comment>
<comment type="similarity">
    <text evidence="1">Belongs to the TrpB family.</text>
</comment>
<proteinExistence type="inferred from homology"/>
<name>TRPB_ECO27</name>
<accession>B7UR67</accession>
<dbReference type="EC" id="4.2.1.20" evidence="1"/>
<dbReference type="EMBL" id="FM180568">
    <property type="protein sequence ID" value="CAS08999.1"/>
    <property type="molecule type" value="Genomic_DNA"/>
</dbReference>
<dbReference type="RefSeq" id="WP_000209513.1">
    <property type="nucleotide sequence ID" value="NC_011601.1"/>
</dbReference>
<dbReference type="SMR" id="B7UR67"/>
<dbReference type="GeneID" id="75171375"/>
<dbReference type="KEGG" id="ecg:E2348C_1451"/>
<dbReference type="HOGENOM" id="CLU_016734_3_1_6"/>
<dbReference type="UniPathway" id="UPA00035">
    <property type="reaction ID" value="UER00044"/>
</dbReference>
<dbReference type="Proteomes" id="UP000008205">
    <property type="component" value="Chromosome"/>
</dbReference>
<dbReference type="GO" id="GO:0005737">
    <property type="term" value="C:cytoplasm"/>
    <property type="evidence" value="ECO:0007669"/>
    <property type="project" value="TreeGrafter"/>
</dbReference>
<dbReference type="GO" id="GO:0004834">
    <property type="term" value="F:tryptophan synthase activity"/>
    <property type="evidence" value="ECO:0007669"/>
    <property type="project" value="UniProtKB-UniRule"/>
</dbReference>
<dbReference type="CDD" id="cd06446">
    <property type="entry name" value="Trp-synth_B"/>
    <property type="match status" value="1"/>
</dbReference>
<dbReference type="FunFam" id="3.40.50.1100:FF:000001">
    <property type="entry name" value="Tryptophan synthase beta chain"/>
    <property type="match status" value="1"/>
</dbReference>
<dbReference type="FunFam" id="3.40.50.1100:FF:000004">
    <property type="entry name" value="Tryptophan synthase beta chain"/>
    <property type="match status" value="1"/>
</dbReference>
<dbReference type="Gene3D" id="3.40.50.1100">
    <property type="match status" value="2"/>
</dbReference>
<dbReference type="HAMAP" id="MF_00133">
    <property type="entry name" value="Trp_synth_beta"/>
    <property type="match status" value="1"/>
</dbReference>
<dbReference type="InterPro" id="IPR006653">
    <property type="entry name" value="Trp_synth_b_CS"/>
</dbReference>
<dbReference type="InterPro" id="IPR006654">
    <property type="entry name" value="Trp_synth_beta"/>
</dbReference>
<dbReference type="InterPro" id="IPR023026">
    <property type="entry name" value="Trp_synth_beta/beta-like"/>
</dbReference>
<dbReference type="InterPro" id="IPR001926">
    <property type="entry name" value="TrpB-like_PALP"/>
</dbReference>
<dbReference type="InterPro" id="IPR036052">
    <property type="entry name" value="TrpB-like_PALP_sf"/>
</dbReference>
<dbReference type="NCBIfam" id="TIGR00263">
    <property type="entry name" value="trpB"/>
    <property type="match status" value="1"/>
</dbReference>
<dbReference type="PANTHER" id="PTHR48077:SF3">
    <property type="entry name" value="TRYPTOPHAN SYNTHASE"/>
    <property type="match status" value="1"/>
</dbReference>
<dbReference type="PANTHER" id="PTHR48077">
    <property type="entry name" value="TRYPTOPHAN SYNTHASE-RELATED"/>
    <property type="match status" value="1"/>
</dbReference>
<dbReference type="Pfam" id="PF00291">
    <property type="entry name" value="PALP"/>
    <property type="match status" value="1"/>
</dbReference>
<dbReference type="PIRSF" id="PIRSF001413">
    <property type="entry name" value="Trp_syn_beta"/>
    <property type="match status" value="1"/>
</dbReference>
<dbReference type="SUPFAM" id="SSF53686">
    <property type="entry name" value="Tryptophan synthase beta subunit-like PLP-dependent enzymes"/>
    <property type="match status" value="1"/>
</dbReference>
<dbReference type="PROSITE" id="PS00168">
    <property type="entry name" value="TRP_SYNTHASE_BETA"/>
    <property type="match status" value="1"/>
</dbReference>